<gene>
    <name evidence="1" type="primary">hslV</name>
    <name type="ordered locus">BQ01950</name>
</gene>
<name>HSLV_BARQU</name>
<organism>
    <name type="scientific">Bartonella quintana (strain Toulouse)</name>
    <name type="common">Rochalimaea quintana</name>
    <dbReference type="NCBI Taxonomy" id="283165"/>
    <lineage>
        <taxon>Bacteria</taxon>
        <taxon>Pseudomonadati</taxon>
        <taxon>Pseudomonadota</taxon>
        <taxon>Alphaproteobacteria</taxon>
        <taxon>Hyphomicrobiales</taxon>
        <taxon>Bartonellaceae</taxon>
        <taxon>Bartonella</taxon>
    </lineage>
</organism>
<reference key="1">
    <citation type="journal article" date="2004" name="Proc. Natl. Acad. Sci. U.S.A.">
        <title>The louse-borne human pathogen Bartonella quintana is a genomic derivative of the zoonotic agent Bartonella henselae.</title>
        <authorList>
            <person name="Alsmark U.C.M."/>
            <person name="Frank A.C."/>
            <person name="Karlberg E.O."/>
            <person name="Legault B.-A."/>
            <person name="Ardell D.H."/>
            <person name="Canbaeck B."/>
            <person name="Eriksson A.-S."/>
            <person name="Naeslund A.K."/>
            <person name="Handley S.A."/>
            <person name="Huvet M."/>
            <person name="La Scola B."/>
            <person name="Holmberg M."/>
            <person name="Andersson S.G.E."/>
        </authorList>
    </citation>
    <scope>NUCLEOTIDE SEQUENCE [LARGE SCALE GENOMIC DNA]</scope>
    <source>
        <strain>Toulouse</strain>
    </source>
</reference>
<proteinExistence type="inferred from homology"/>
<dbReference type="EC" id="3.4.25.2" evidence="1"/>
<dbReference type="EMBL" id="BX897700">
    <property type="protein sequence ID" value="CAF25698.1"/>
    <property type="molecule type" value="Genomic_DNA"/>
</dbReference>
<dbReference type="RefSeq" id="WP_011179013.1">
    <property type="nucleotide sequence ID" value="NC_005955.1"/>
</dbReference>
<dbReference type="SMR" id="Q6G0Q0"/>
<dbReference type="MEROPS" id="T01.006"/>
<dbReference type="KEGG" id="bqu:BQ01950"/>
<dbReference type="eggNOG" id="COG5405">
    <property type="taxonomic scope" value="Bacteria"/>
</dbReference>
<dbReference type="HOGENOM" id="CLU_093872_1_0_5"/>
<dbReference type="OrthoDB" id="9804884at2"/>
<dbReference type="Proteomes" id="UP000000597">
    <property type="component" value="Chromosome"/>
</dbReference>
<dbReference type="GO" id="GO:0009376">
    <property type="term" value="C:HslUV protease complex"/>
    <property type="evidence" value="ECO:0007669"/>
    <property type="project" value="UniProtKB-UniRule"/>
</dbReference>
<dbReference type="GO" id="GO:0005839">
    <property type="term" value="C:proteasome core complex"/>
    <property type="evidence" value="ECO:0007669"/>
    <property type="project" value="InterPro"/>
</dbReference>
<dbReference type="GO" id="GO:0046872">
    <property type="term" value="F:metal ion binding"/>
    <property type="evidence" value="ECO:0007669"/>
    <property type="project" value="UniProtKB-KW"/>
</dbReference>
<dbReference type="GO" id="GO:0004298">
    <property type="term" value="F:threonine-type endopeptidase activity"/>
    <property type="evidence" value="ECO:0007669"/>
    <property type="project" value="UniProtKB-KW"/>
</dbReference>
<dbReference type="GO" id="GO:0051603">
    <property type="term" value="P:proteolysis involved in protein catabolic process"/>
    <property type="evidence" value="ECO:0007669"/>
    <property type="project" value="InterPro"/>
</dbReference>
<dbReference type="CDD" id="cd01913">
    <property type="entry name" value="protease_HslV"/>
    <property type="match status" value="1"/>
</dbReference>
<dbReference type="Gene3D" id="3.60.20.10">
    <property type="entry name" value="Glutamine Phosphoribosylpyrophosphate, subunit 1, domain 1"/>
    <property type="match status" value="1"/>
</dbReference>
<dbReference type="HAMAP" id="MF_00248">
    <property type="entry name" value="HslV"/>
    <property type="match status" value="1"/>
</dbReference>
<dbReference type="InterPro" id="IPR022281">
    <property type="entry name" value="ATP-dep_Prtase_HsIV_su"/>
</dbReference>
<dbReference type="InterPro" id="IPR029055">
    <property type="entry name" value="Ntn_hydrolases_N"/>
</dbReference>
<dbReference type="InterPro" id="IPR001353">
    <property type="entry name" value="Proteasome_sua/b"/>
</dbReference>
<dbReference type="InterPro" id="IPR023333">
    <property type="entry name" value="Proteasome_suB-type"/>
</dbReference>
<dbReference type="NCBIfam" id="TIGR03692">
    <property type="entry name" value="ATP_dep_HslV"/>
    <property type="match status" value="1"/>
</dbReference>
<dbReference type="NCBIfam" id="NF003964">
    <property type="entry name" value="PRK05456.1"/>
    <property type="match status" value="1"/>
</dbReference>
<dbReference type="PANTHER" id="PTHR32194:SF7">
    <property type="entry name" value="ATP-DEPENDENT PROTEASE SUBUNIT HSLV"/>
    <property type="match status" value="1"/>
</dbReference>
<dbReference type="PANTHER" id="PTHR32194">
    <property type="entry name" value="METALLOPROTEASE TLDD"/>
    <property type="match status" value="1"/>
</dbReference>
<dbReference type="Pfam" id="PF00227">
    <property type="entry name" value="Proteasome"/>
    <property type="match status" value="1"/>
</dbReference>
<dbReference type="PIRSF" id="PIRSF039093">
    <property type="entry name" value="HslV"/>
    <property type="match status" value="1"/>
</dbReference>
<dbReference type="SUPFAM" id="SSF56235">
    <property type="entry name" value="N-terminal nucleophile aminohydrolases (Ntn hydrolases)"/>
    <property type="match status" value="1"/>
</dbReference>
<dbReference type="PROSITE" id="PS51476">
    <property type="entry name" value="PROTEASOME_BETA_2"/>
    <property type="match status" value="1"/>
</dbReference>
<keyword id="KW-0021">Allosteric enzyme</keyword>
<keyword id="KW-0963">Cytoplasm</keyword>
<keyword id="KW-0378">Hydrolase</keyword>
<keyword id="KW-0479">Metal-binding</keyword>
<keyword id="KW-0645">Protease</keyword>
<keyword id="KW-0915">Sodium</keyword>
<keyword id="KW-0888">Threonine protease</keyword>
<accession>Q6G0Q0</accession>
<feature type="chain" id="PRO_0000148085" description="ATP-dependent protease subunit HslV">
    <location>
        <begin position="1"/>
        <end position="193"/>
    </location>
</feature>
<feature type="active site" evidence="1">
    <location>
        <position position="12"/>
    </location>
</feature>
<feature type="binding site" evidence="1">
    <location>
        <position position="167"/>
    </location>
    <ligand>
        <name>Na(+)</name>
        <dbReference type="ChEBI" id="CHEBI:29101"/>
    </ligand>
</feature>
<feature type="binding site" evidence="1">
    <location>
        <position position="170"/>
    </location>
    <ligand>
        <name>Na(+)</name>
        <dbReference type="ChEBI" id="CHEBI:29101"/>
    </ligand>
</feature>
<feature type="binding site" evidence="1">
    <location>
        <position position="173"/>
    </location>
    <ligand>
        <name>Na(+)</name>
        <dbReference type="ChEBI" id="CHEBI:29101"/>
    </ligand>
</feature>
<protein>
    <recommendedName>
        <fullName evidence="1">ATP-dependent protease subunit HslV</fullName>
        <ecNumber evidence="1">3.4.25.2</ecNumber>
    </recommendedName>
</protein>
<sequence>MAEHKPDIMYGTTIITVRKGGKVVIAGDGQVSFGQTIMKGNARKVRRLGKSGTVIAGFAGATADAFTLLERLETKLEQYPDQLMRACVELAKDWRTDRYLRRLEAMMLVADKKITLALTGLGDVLEPEDGIMAIGSGGNFALSAAWALVDMNLDAETIARKAMDIAAKICVYTNDHFTIETLDAELSSLEKAI</sequence>
<comment type="function">
    <text evidence="1">Protease subunit of a proteasome-like degradation complex believed to be a general protein degrading machinery.</text>
</comment>
<comment type="catalytic activity">
    <reaction evidence="1">
        <text>ATP-dependent cleavage of peptide bonds with broad specificity.</text>
        <dbReference type="EC" id="3.4.25.2"/>
    </reaction>
</comment>
<comment type="activity regulation">
    <text evidence="1">Allosterically activated by HslU binding.</text>
</comment>
<comment type="subunit">
    <text evidence="1">A double ring-shaped homohexamer of HslV is capped on each side by a ring-shaped HslU homohexamer. The assembly of the HslU/HslV complex is dependent on binding of ATP.</text>
</comment>
<comment type="subcellular location">
    <subcellularLocation>
        <location evidence="1">Cytoplasm</location>
    </subcellularLocation>
</comment>
<comment type="similarity">
    <text evidence="1">Belongs to the peptidase T1B family. HslV subfamily.</text>
</comment>
<evidence type="ECO:0000255" key="1">
    <source>
        <dbReference type="HAMAP-Rule" id="MF_00248"/>
    </source>
</evidence>